<protein>
    <recommendedName>
        <fullName evidence="1">UPF0223 protein OB1419</fullName>
    </recommendedName>
</protein>
<sequence>MSYQYPMDETWSTEEIIDVVNFFSLIEKAYEKQVDREEILALYRRFKQIVPSKSEEKKLFTQFQEASGYSSYHVVKKARETNESNIRM</sequence>
<proteinExistence type="inferred from homology"/>
<gene>
    <name type="ordered locus">OB1419</name>
</gene>
<accession>P59153</accession>
<name>Y1419_OCEIH</name>
<evidence type="ECO:0000255" key="1">
    <source>
        <dbReference type="HAMAP-Rule" id="MF_01041"/>
    </source>
</evidence>
<feature type="chain" id="PRO_0000216682" description="UPF0223 protein OB1419">
    <location>
        <begin position="1"/>
        <end position="88"/>
    </location>
</feature>
<reference key="1">
    <citation type="journal article" date="2002" name="Nucleic Acids Res.">
        <title>Genome sequence of Oceanobacillus iheyensis isolated from the Iheya Ridge and its unexpected adaptive capabilities to extreme environments.</title>
        <authorList>
            <person name="Takami H."/>
            <person name="Takaki Y."/>
            <person name="Uchiyama I."/>
        </authorList>
    </citation>
    <scope>NUCLEOTIDE SEQUENCE [LARGE SCALE GENOMIC DNA]</scope>
    <source>
        <strain>DSM 14371 / CIP 107618 / JCM 11309 / KCTC 3954 / HTE831</strain>
    </source>
</reference>
<comment type="similarity">
    <text evidence="1">Belongs to the UPF0223 family.</text>
</comment>
<dbReference type="EMBL" id="BA000028">
    <property type="protein sequence ID" value="BAC13375.1"/>
    <property type="molecule type" value="Genomic_DNA"/>
</dbReference>
<dbReference type="RefSeq" id="WP_011065825.1">
    <property type="nucleotide sequence ID" value="NC_004193.1"/>
</dbReference>
<dbReference type="SMR" id="P59153"/>
<dbReference type="STRING" id="221109.gene:10733659"/>
<dbReference type="KEGG" id="oih:OB1419"/>
<dbReference type="eggNOG" id="COG4476">
    <property type="taxonomic scope" value="Bacteria"/>
</dbReference>
<dbReference type="HOGENOM" id="CLU_166693_0_0_9"/>
<dbReference type="OrthoDB" id="1649074at2"/>
<dbReference type="PhylomeDB" id="P59153"/>
<dbReference type="Proteomes" id="UP000000822">
    <property type="component" value="Chromosome"/>
</dbReference>
<dbReference type="Gene3D" id="1.10.220.80">
    <property type="entry name" value="BH2638-like"/>
    <property type="match status" value="1"/>
</dbReference>
<dbReference type="HAMAP" id="MF_01041">
    <property type="entry name" value="UPF0223"/>
    <property type="match status" value="1"/>
</dbReference>
<dbReference type="InterPro" id="IPR023324">
    <property type="entry name" value="BH2638-like_sf"/>
</dbReference>
<dbReference type="InterPro" id="IPR007920">
    <property type="entry name" value="UPF0223"/>
</dbReference>
<dbReference type="NCBIfam" id="NF003353">
    <property type="entry name" value="PRK04387.1"/>
    <property type="match status" value="1"/>
</dbReference>
<dbReference type="Pfam" id="PF05256">
    <property type="entry name" value="UPF0223"/>
    <property type="match status" value="1"/>
</dbReference>
<dbReference type="PIRSF" id="PIRSF037260">
    <property type="entry name" value="UPF0223"/>
    <property type="match status" value="1"/>
</dbReference>
<dbReference type="SUPFAM" id="SSF158504">
    <property type="entry name" value="BH2638-like"/>
    <property type="match status" value="1"/>
</dbReference>
<organism>
    <name type="scientific">Oceanobacillus iheyensis (strain DSM 14371 / CIP 107618 / JCM 11309 / KCTC 3954 / HTE831)</name>
    <dbReference type="NCBI Taxonomy" id="221109"/>
    <lineage>
        <taxon>Bacteria</taxon>
        <taxon>Bacillati</taxon>
        <taxon>Bacillota</taxon>
        <taxon>Bacilli</taxon>
        <taxon>Bacillales</taxon>
        <taxon>Bacillaceae</taxon>
        <taxon>Oceanobacillus</taxon>
    </lineage>
</organism>
<keyword id="KW-1185">Reference proteome</keyword>